<keyword id="KW-0963">Cytoplasm</keyword>
<keyword id="KW-0255">Endonuclease</keyword>
<keyword id="KW-0378">Hydrolase</keyword>
<keyword id="KW-0479">Metal-binding</keyword>
<keyword id="KW-0540">Nuclease</keyword>
<keyword id="KW-1185">Reference proteome</keyword>
<keyword id="KW-0690">Ribosome biogenesis</keyword>
<keyword id="KW-0698">rRNA processing</keyword>
<keyword id="KW-0862">Zinc</keyword>
<reference key="1">
    <citation type="journal article" date="2004" name="Nat. Biotechnol.">
        <title>The genome sequence of the anaerobic, sulfate-reducing bacterium Desulfovibrio vulgaris Hildenborough.</title>
        <authorList>
            <person name="Heidelberg J.F."/>
            <person name="Seshadri R."/>
            <person name="Haveman S.A."/>
            <person name="Hemme C.L."/>
            <person name="Paulsen I.T."/>
            <person name="Kolonay J.F."/>
            <person name="Eisen J.A."/>
            <person name="Ward N.L."/>
            <person name="Methe B.A."/>
            <person name="Brinkac L.M."/>
            <person name="Daugherty S.C."/>
            <person name="DeBoy R.T."/>
            <person name="Dodson R.J."/>
            <person name="Durkin A.S."/>
            <person name="Madupu R."/>
            <person name="Nelson W.C."/>
            <person name="Sullivan S.A."/>
            <person name="Fouts D.E."/>
            <person name="Haft D.H."/>
            <person name="Selengut J."/>
            <person name="Peterson J.D."/>
            <person name="Davidsen T.M."/>
            <person name="Zafar N."/>
            <person name="Zhou L."/>
            <person name="Radune D."/>
            <person name="Dimitrov G."/>
            <person name="Hance M."/>
            <person name="Tran K."/>
            <person name="Khouri H.M."/>
            <person name="Gill J."/>
            <person name="Utterback T.R."/>
            <person name="Feldblyum T.V."/>
            <person name="Wall J.D."/>
            <person name="Voordouw G."/>
            <person name="Fraser C.M."/>
        </authorList>
    </citation>
    <scope>NUCLEOTIDE SEQUENCE [LARGE SCALE GENOMIC DNA]</scope>
    <source>
        <strain>ATCC 29579 / DSM 644 / CCUG 34227 / NCIMB 8303 / VKM B-1760 / Hildenborough</strain>
    </source>
</reference>
<sequence length="162" mass="17354">MSRLLVDDPCRAAWRLPIALRDISGVFAAMQCATGLEGFEVELTIADDALIAMINEEQLGCIGPTNILSFPAYGAPPDYPADGMECGTGQDAHTSLPLLGSLVLSVDTLRREAFLYGQPVQEHCLRLLAHGLGHIAGYDHGAEMEAFEEAAREAALATRTAR</sequence>
<gene>
    <name evidence="1" type="primary">ybeY</name>
    <name type="ordered locus">DVU_1883</name>
</gene>
<name>YBEY_NITV2</name>
<dbReference type="EC" id="3.1.-.-" evidence="1"/>
<dbReference type="EMBL" id="AE017285">
    <property type="protein sequence ID" value="AAS96359.1"/>
    <property type="molecule type" value="Genomic_DNA"/>
</dbReference>
<dbReference type="RefSeq" id="WP_010939169.1">
    <property type="nucleotide sequence ID" value="NC_002937.3"/>
</dbReference>
<dbReference type="RefSeq" id="YP_011100.1">
    <property type="nucleotide sequence ID" value="NC_002937.3"/>
</dbReference>
<dbReference type="SMR" id="Q72AV7"/>
<dbReference type="STRING" id="882.DVU_1883"/>
<dbReference type="PaxDb" id="882-DVU_1883"/>
<dbReference type="EnsemblBacteria" id="AAS96359">
    <property type="protein sequence ID" value="AAS96359"/>
    <property type="gene ID" value="DVU_1883"/>
</dbReference>
<dbReference type="KEGG" id="dvu:DVU_1883"/>
<dbReference type="PATRIC" id="fig|882.5.peg.1725"/>
<dbReference type="eggNOG" id="COG0319">
    <property type="taxonomic scope" value="Bacteria"/>
</dbReference>
<dbReference type="HOGENOM" id="CLU_106710_4_1_7"/>
<dbReference type="OrthoDB" id="9807740at2"/>
<dbReference type="Proteomes" id="UP000002194">
    <property type="component" value="Chromosome"/>
</dbReference>
<dbReference type="GO" id="GO:0005737">
    <property type="term" value="C:cytoplasm"/>
    <property type="evidence" value="ECO:0007669"/>
    <property type="project" value="UniProtKB-SubCell"/>
</dbReference>
<dbReference type="GO" id="GO:0004222">
    <property type="term" value="F:metalloendopeptidase activity"/>
    <property type="evidence" value="ECO:0007669"/>
    <property type="project" value="InterPro"/>
</dbReference>
<dbReference type="GO" id="GO:0004521">
    <property type="term" value="F:RNA endonuclease activity"/>
    <property type="evidence" value="ECO:0007669"/>
    <property type="project" value="UniProtKB-UniRule"/>
</dbReference>
<dbReference type="GO" id="GO:0008270">
    <property type="term" value="F:zinc ion binding"/>
    <property type="evidence" value="ECO:0007669"/>
    <property type="project" value="UniProtKB-UniRule"/>
</dbReference>
<dbReference type="GO" id="GO:0006364">
    <property type="term" value="P:rRNA processing"/>
    <property type="evidence" value="ECO:0007669"/>
    <property type="project" value="UniProtKB-UniRule"/>
</dbReference>
<dbReference type="Gene3D" id="3.40.390.30">
    <property type="entry name" value="Metalloproteases ('zincins'), catalytic domain"/>
    <property type="match status" value="1"/>
</dbReference>
<dbReference type="HAMAP" id="MF_00009">
    <property type="entry name" value="Endoribonucl_YbeY"/>
    <property type="match status" value="1"/>
</dbReference>
<dbReference type="InterPro" id="IPR023091">
    <property type="entry name" value="MetalPrtase_cat_dom_sf_prd"/>
</dbReference>
<dbReference type="InterPro" id="IPR002036">
    <property type="entry name" value="YbeY"/>
</dbReference>
<dbReference type="NCBIfam" id="TIGR00043">
    <property type="entry name" value="rRNA maturation RNase YbeY"/>
    <property type="match status" value="1"/>
</dbReference>
<dbReference type="Pfam" id="PF02130">
    <property type="entry name" value="YbeY"/>
    <property type="match status" value="1"/>
</dbReference>
<dbReference type="SUPFAM" id="SSF55486">
    <property type="entry name" value="Metalloproteases ('zincins'), catalytic domain"/>
    <property type="match status" value="1"/>
</dbReference>
<comment type="function">
    <text evidence="1">Single strand-specific metallo-endoribonuclease involved in late-stage 70S ribosome quality control and in maturation of the 3' terminus of the 16S rRNA.</text>
</comment>
<comment type="cofactor">
    <cofactor evidence="1">
        <name>Zn(2+)</name>
        <dbReference type="ChEBI" id="CHEBI:29105"/>
    </cofactor>
    <text evidence="1">Binds 1 zinc ion.</text>
</comment>
<comment type="subcellular location">
    <subcellularLocation>
        <location evidence="1">Cytoplasm</location>
    </subcellularLocation>
</comment>
<comment type="similarity">
    <text evidence="1">Belongs to the endoribonuclease YbeY family.</text>
</comment>
<organism>
    <name type="scientific">Nitratidesulfovibrio vulgaris (strain ATCC 29579 / DSM 644 / CCUG 34227 / NCIMB 8303 / VKM B-1760 / Hildenborough)</name>
    <name type="common">Desulfovibrio vulgaris</name>
    <dbReference type="NCBI Taxonomy" id="882"/>
    <lineage>
        <taxon>Bacteria</taxon>
        <taxon>Pseudomonadati</taxon>
        <taxon>Thermodesulfobacteriota</taxon>
        <taxon>Desulfovibrionia</taxon>
        <taxon>Desulfovibrionales</taxon>
        <taxon>Desulfovibrionaceae</taxon>
        <taxon>Nitratidesulfovibrio</taxon>
    </lineage>
</organism>
<feature type="chain" id="PRO_0000102448" description="Endoribonuclease YbeY">
    <location>
        <begin position="1"/>
        <end position="162"/>
    </location>
</feature>
<feature type="binding site" evidence="1">
    <location>
        <position position="130"/>
    </location>
    <ligand>
        <name>Zn(2+)</name>
        <dbReference type="ChEBI" id="CHEBI:29105"/>
        <note>catalytic</note>
    </ligand>
</feature>
<feature type="binding site" evidence="1">
    <location>
        <position position="134"/>
    </location>
    <ligand>
        <name>Zn(2+)</name>
        <dbReference type="ChEBI" id="CHEBI:29105"/>
        <note>catalytic</note>
    </ligand>
</feature>
<feature type="binding site" evidence="1">
    <location>
        <position position="140"/>
    </location>
    <ligand>
        <name>Zn(2+)</name>
        <dbReference type="ChEBI" id="CHEBI:29105"/>
        <note>catalytic</note>
    </ligand>
</feature>
<accession>Q72AV7</accession>
<proteinExistence type="inferred from homology"/>
<protein>
    <recommendedName>
        <fullName evidence="1">Endoribonuclease YbeY</fullName>
        <ecNumber evidence="1">3.1.-.-</ecNumber>
    </recommendedName>
</protein>
<evidence type="ECO:0000255" key="1">
    <source>
        <dbReference type="HAMAP-Rule" id="MF_00009"/>
    </source>
</evidence>